<protein>
    <recommendedName>
        <fullName evidence="1">ATP phosphoribosyltransferase</fullName>
        <shortName evidence="1">ATP-PRT</shortName>
        <shortName evidence="1">ATP-PRTase</shortName>
        <ecNumber evidence="1">2.4.2.17</ecNumber>
    </recommendedName>
</protein>
<keyword id="KW-0028">Amino-acid biosynthesis</keyword>
<keyword id="KW-0067">ATP-binding</keyword>
<keyword id="KW-0963">Cytoplasm</keyword>
<keyword id="KW-0328">Glycosyltransferase</keyword>
<keyword id="KW-0368">Histidine biosynthesis</keyword>
<keyword id="KW-0460">Magnesium</keyword>
<keyword id="KW-0479">Metal-binding</keyword>
<keyword id="KW-0547">Nucleotide-binding</keyword>
<keyword id="KW-0808">Transferase</keyword>
<evidence type="ECO:0000255" key="1">
    <source>
        <dbReference type="HAMAP-Rule" id="MF_00079"/>
    </source>
</evidence>
<reference key="1">
    <citation type="journal article" date="1999" name="Mol. Biol. Evol.">
        <title>Sequence evolution in bacterial endosymbionts having extreme base compositions.</title>
        <authorList>
            <person name="Clark M.A."/>
            <person name="Moran N.A."/>
            <person name="Baumann P."/>
        </authorList>
    </citation>
    <scope>NUCLEOTIDE SEQUENCE [GENOMIC DNA]</scope>
</reference>
<sequence length="299" mass="33295">MFNNNRIRIAMQKTGRLSSDSIKLLTSCGIKINLKQQKLIAFAENMPIDAMLVRDDDIPGLVMDGVVDLGIVGENVLEEERLNRISQNSEHSYVTLTRLDFGICRLSLAVPVNTTYTHINSLKNIRIATSYPHLLKKYLDKKNISFKSCMLNGSVEVAPRAGLADAICDLVSTGATLEANGLREVQVVYRSRACLISKNGDINTDKKEVINKLMTRIKGVIKARESKYIMLHAPINKLEEVISLLHGAERPTVLKLAGDDNRVAMHMVSSETLFWETMEKLKALGASSILVLPIEKMME</sequence>
<feature type="chain" id="PRO_0000151836" description="ATP phosphoribosyltransferase">
    <location>
        <begin position="1"/>
        <end position="299"/>
    </location>
</feature>
<name>HIS1_BUCDN</name>
<dbReference type="EC" id="2.4.2.17" evidence="1"/>
<dbReference type="EMBL" id="AF129281">
    <property type="protein sequence ID" value="AAF13769.1"/>
    <property type="molecule type" value="Genomic_DNA"/>
</dbReference>
<dbReference type="SMR" id="Q9RQ89"/>
<dbReference type="STRING" id="118101.ATN01_00485"/>
<dbReference type="UniPathway" id="UPA00031">
    <property type="reaction ID" value="UER00006"/>
</dbReference>
<dbReference type="GO" id="GO:0005737">
    <property type="term" value="C:cytoplasm"/>
    <property type="evidence" value="ECO:0007669"/>
    <property type="project" value="UniProtKB-SubCell"/>
</dbReference>
<dbReference type="GO" id="GO:0005524">
    <property type="term" value="F:ATP binding"/>
    <property type="evidence" value="ECO:0007669"/>
    <property type="project" value="UniProtKB-KW"/>
</dbReference>
<dbReference type="GO" id="GO:0003879">
    <property type="term" value="F:ATP phosphoribosyltransferase activity"/>
    <property type="evidence" value="ECO:0007669"/>
    <property type="project" value="UniProtKB-UniRule"/>
</dbReference>
<dbReference type="GO" id="GO:0000287">
    <property type="term" value="F:magnesium ion binding"/>
    <property type="evidence" value="ECO:0007669"/>
    <property type="project" value="UniProtKB-UniRule"/>
</dbReference>
<dbReference type="GO" id="GO:0000105">
    <property type="term" value="P:L-histidine biosynthetic process"/>
    <property type="evidence" value="ECO:0007669"/>
    <property type="project" value="UniProtKB-UniRule"/>
</dbReference>
<dbReference type="FunFam" id="3.30.70.120:FF:000002">
    <property type="entry name" value="ATP phosphoribosyltransferase"/>
    <property type="match status" value="1"/>
</dbReference>
<dbReference type="FunFam" id="3.40.190.10:FF:000008">
    <property type="entry name" value="ATP phosphoribosyltransferase"/>
    <property type="match status" value="1"/>
</dbReference>
<dbReference type="Gene3D" id="3.30.70.120">
    <property type="match status" value="1"/>
</dbReference>
<dbReference type="Gene3D" id="3.40.190.10">
    <property type="entry name" value="Periplasmic binding protein-like II"/>
    <property type="match status" value="2"/>
</dbReference>
<dbReference type="HAMAP" id="MF_00079">
    <property type="entry name" value="HisG_Long"/>
    <property type="match status" value="1"/>
</dbReference>
<dbReference type="InterPro" id="IPR020621">
    <property type="entry name" value="ATP-PRT_HisG_long"/>
</dbReference>
<dbReference type="InterPro" id="IPR013820">
    <property type="entry name" value="ATP_PRibTrfase_cat"/>
</dbReference>
<dbReference type="InterPro" id="IPR018198">
    <property type="entry name" value="ATP_PRibTrfase_CS"/>
</dbReference>
<dbReference type="InterPro" id="IPR001348">
    <property type="entry name" value="ATP_PRibTrfase_HisG"/>
</dbReference>
<dbReference type="InterPro" id="IPR013115">
    <property type="entry name" value="HisG_C"/>
</dbReference>
<dbReference type="InterPro" id="IPR011322">
    <property type="entry name" value="N-reg_PII-like_a/b"/>
</dbReference>
<dbReference type="InterPro" id="IPR015867">
    <property type="entry name" value="N-reg_PII/ATP_PRibTrfase_C"/>
</dbReference>
<dbReference type="NCBIfam" id="TIGR00070">
    <property type="entry name" value="hisG"/>
    <property type="match status" value="1"/>
</dbReference>
<dbReference type="NCBIfam" id="TIGR03455">
    <property type="entry name" value="HisG_C-term"/>
    <property type="match status" value="1"/>
</dbReference>
<dbReference type="PANTHER" id="PTHR21403:SF8">
    <property type="entry name" value="ATP PHOSPHORIBOSYLTRANSFERASE"/>
    <property type="match status" value="1"/>
</dbReference>
<dbReference type="PANTHER" id="PTHR21403">
    <property type="entry name" value="ATP PHOSPHORIBOSYLTRANSFERASE ATP-PRTASE"/>
    <property type="match status" value="1"/>
</dbReference>
<dbReference type="Pfam" id="PF01634">
    <property type="entry name" value="HisG"/>
    <property type="match status" value="1"/>
</dbReference>
<dbReference type="Pfam" id="PF08029">
    <property type="entry name" value="HisG_C"/>
    <property type="match status" value="1"/>
</dbReference>
<dbReference type="SUPFAM" id="SSF54913">
    <property type="entry name" value="GlnB-like"/>
    <property type="match status" value="1"/>
</dbReference>
<dbReference type="SUPFAM" id="SSF53850">
    <property type="entry name" value="Periplasmic binding protein-like II"/>
    <property type="match status" value="1"/>
</dbReference>
<dbReference type="PROSITE" id="PS01316">
    <property type="entry name" value="ATP_P_PHORIBOSYLTR"/>
    <property type="match status" value="1"/>
</dbReference>
<accession>Q9RQ89</accession>
<organism>
    <name type="scientific">Buchnera aphidicola subsp. Diuraphis noxia</name>
    <dbReference type="NCBI Taxonomy" id="118101"/>
    <lineage>
        <taxon>Bacteria</taxon>
        <taxon>Pseudomonadati</taxon>
        <taxon>Pseudomonadota</taxon>
        <taxon>Gammaproteobacteria</taxon>
        <taxon>Enterobacterales</taxon>
        <taxon>Erwiniaceae</taxon>
        <taxon>Buchnera</taxon>
    </lineage>
</organism>
<gene>
    <name evidence="1" type="primary">hisG</name>
</gene>
<comment type="function">
    <text evidence="1">Catalyzes the condensation of ATP and 5-phosphoribose 1-diphosphate to form N'-(5'-phosphoribosyl)-ATP (PR-ATP). Has a crucial role in the pathway because the rate of histidine biosynthesis seems to be controlled primarily by regulation of HisG enzymatic activity.</text>
</comment>
<comment type="catalytic activity">
    <reaction evidence="1">
        <text>1-(5-phospho-beta-D-ribosyl)-ATP + diphosphate = 5-phospho-alpha-D-ribose 1-diphosphate + ATP</text>
        <dbReference type="Rhea" id="RHEA:18473"/>
        <dbReference type="ChEBI" id="CHEBI:30616"/>
        <dbReference type="ChEBI" id="CHEBI:33019"/>
        <dbReference type="ChEBI" id="CHEBI:58017"/>
        <dbReference type="ChEBI" id="CHEBI:73183"/>
        <dbReference type="EC" id="2.4.2.17"/>
    </reaction>
</comment>
<comment type="cofactor">
    <cofactor evidence="1">
        <name>Mg(2+)</name>
        <dbReference type="ChEBI" id="CHEBI:18420"/>
    </cofactor>
</comment>
<comment type="activity regulation">
    <text evidence="1">Feedback inhibited by histidine.</text>
</comment>
<comment type="pathway">
    <text evidence="1">Amino-acid biosynthesis; L-histidine biosynthesis; L-histidine from 5-phospho-alpha-D-ribose 1-diphosphate: step 1/9.</text>
</comment>
<comment type="subunit">
    <text evidence="1">Equilibrium between an active dimeric form, an inactive hexameric form and higher aggregates. Interconversion between the various forms is largely reversible and is influenced by the natural substrates and inhibitors of the enzyme.</text>
</comment>
<comment type="subcellular location">
    <subcellularLocation>
        <location evidence="1">Cytoplasm</location>
    </subcellularLocation>
</comment>
<comment type="similarity">
    <text evidence="1">Belongs to the ATP phosphoribosyltransferase family. Long subfamily.</text>
</comment>
<proteinExistence type="inferred from homology"/>